<organism>
    <name type="scientific">Coccidioides immitis (strain RS)</name>
    <name type="common">Valley fever fungus</name>
    <dbReference type="NCBI Taxonomy" id="246410"/>
    <lineage>
        <taxon>Eukaryota</taxon>
        <taxon>Fungi</taxon>
        <taxon>Dikarya</taxon>
        <taxon>Ascomycota</taxon>
        <taxon>Pezizomycotina</taxon>
        <taxon>Eurotiomycetes</taxon>
        <taxon>Eurotiomycetidae</taxon>
        <taxon>Onygenales</taxon>
        <taxon>Onygenaceae</taxon>
        <taxon>Coccidioides</taxon>
    </lineage>
</organism>
<comment type="function">
    <text evidence="1">Catalytic subunit of the poly(A)-nuclease (PAN) deadenylation complex, one of two cytoplasmic mRNA deadenylases involved in mRNA turnover. PAN specifically shortens poly(A) tails of RNA and the activity is stimulated by poly(A)-binding protein PAB1. PAN deadenylation is followed by rapid degradation of the shortened mRNA tails by the CCR4-NOT complex. Deadenylated mRNAs are then degraded by two alternative mechanisms, namely exosome-mediated 3'-5' exonucleolytic degradation, or deadenylation-dependent mRNA decaping and subsequent 5'-3' exonucleolytic degradation by XRN1. May also be involved in post-transcriptional maturation of mRNA poly(A) tails.</text>
</comment>
<comment type="catalytic activity">
    <reaction evidence="1">
        <text>Exonucleolytic cleavage of poly(A) to 5'-AMP.</text>
        <dbReference type="EC" id="3.1.13.4"/>
    </reaction>
</comment>
<comment type="cofactor">
    <cofactor evidence="1">
        <name>a divalent metal cation</name>
        <dbReference type="ChEBI" id="CHEBI:60240"/>
    </cofactor>
    <text evidence="1">Binds 2 metal cations per subunit in the catalytic exonuclease domain.</text>
</comment>
<comment type="activity regulation">
    <text evidence="1">Positively regulated by the regulatory subunit PAN3.</text>
</comment>
<comment type="subunit">
    <text evidence="1">Forms a heterotrimer with an asymmetric homodimer of the regulatory subunit PAN3 to form the poly(A)-nuclease (PAN) deadenylation complex.</text>
</comment>
<comment type="subcellular location">
    <subcellularLocation>
        <location evidence="1">Cytoplasm</location>
    </subcellularLocation>
</comment>
<comment type="domain">
    <text evidence="1">Contains a pseudo-UCH domain. This ubiquitin C-terminal hydrolase (UCH)-like or ubiquitin specific protease (USP)-like domain is predicted to be catalytically inactive because it lacks the active site catalytic triad characteristic of thiol proteases, with residues at the equivalent structural positions that are incompatible with catalysis, and it cannot bind ubiquitin. It functions as a structural scaffold for intra- and intermolecular interactions in the complex.</text>
</comment>
<comment type="domain">
    <text evidence="1">The linker, or PAN3 interaction domain (PID), between the WD40 repeats and the pseudo-UCH domain mediates interaction with PAN3.</text>
</comment>
<comment type="similarity">
    <text evidence="1">Belongs to the peptidase C19 family. PAN2 subfamily.</text>
</comment>
<comment type="sequence caution" evidence="3">
    <conflict type="erroneous initiation">
        <sequence resource="EMBL-CDS" id="EAS35886"/>
    </conflict>
    <text>Extended N-terminus.</text>
</comment>
<gene>
    <name evidence="1" type="primary">PAN2</name>
    <name type="ORF">CIMG_01240</name>
</gene>
<proteinExistence type="inferred from homology"/>
<keyword id="KW-0963">Cytoplasm</keyword>
<keyword id="KW-0269">Exonuclease</keyword>
<keyword id="KW-0378">Hydrolase</keyword>
<keyword id="KW-0479">Metal-binding</keyword>
<keyword id="KW-0507">mRNA processing</keyword>
<keyword id="KW-0540">Nuclease</keyword>
<keyword id="KW-1185">Reference proteome</keyword>
<keyword id="KW-0677">Repeat</keyword>
<keyword id="KW-0853">WD repeat</keyword>
<accession>Q1E873</accession>
<accession>A0A0D6K9Q2</accession>
<accession>J3KIZ4</accession>
<protein>
    <recommendedName>
        <fullName evidence="1">PAN2-PAN3 deadenylation complex catalytic subunit PAN2</fullName>
        <ecNumber evidence="1">3.1.13.4</ecNumber>
    </recommendedName>
    <alternativeName>
        <fullName evidence="1">PAB1P-dependent poly(A)-specific ribonuclease</fullName>
    </alternativeName>
    <alternativeName>
        <fullName evidence="1">Poly(A)-nuclease deadenylation complex subunit 2</fullName>
        <shortName evidence="1">PAN deadenylation complex subunit 2</shortName>
    </alternativeName>
</protein>
<evidence type="ECO:0000255" key="1">
    <source>
        <dbReference type="HAMAP-Rule" id="MF_03182"/>
    </source>
</evidence>
<evidence type="ECO:0000256" key="2">
    <source>
        <dbReference type="SAM" id="MobiDB-lite"/>
    </source>
</evidence>
<evidence type="ECO:0000305" key="3"/>
<name>PAN2_COCIM</name>
<dbReference type="EC" id="3.1.13.4" evidence="1"/>
<dbReference type="EMBL" id="GG704911">
    <property type="protein sequence ID" value="EAS35886.1"/>
    <property type="status" value="ALT_INIT"/>
    <property type="molecule type" value="Genomic_DNA"/>
</dbReference>
<dbReference type="RefSeq" id="XP_001247469.1">
    <property type="nucleotide sequence ID" value="XM_001247468.2"/>
</dbReference>
<dbReference type="SMR" id="Q1E873"/>
<dbReference type="FunCoup" id="Q1E873">
    <property type="interactions" value="658"/>
</dbReference>
<dbReference type="STRING" id="246410.Q1E873"/>
<dbReference type="GeneID" id="4567876"/>
<dbReference type="KEGG" id="cim:CIMG_01240"/>
<dbReference type="InParanoid" id="Q1E873"/>
<dbReference type="OrthoDB" id="16516at2759"/>
<dbReference type="Proteomes" id="UP000001261">
    <property type="component" value="Unassembled WGS sequence"/>
</dbReference>
<dbReference type="GO" id="GO:0000932">
    <property type="term" value="C:P-body"/>
    <property type="evidence" value="ECO:0007669"/>
    <property type="project" value="TreeGrafter"/>
</dbReference>
<dbReference type="GO" id="GO:0031251">
    <property type="term" value="C:PAN complex"/>
    <property type="evidence" value="ECO:0007669"/>
    <property type="project" value="UniProtKB-UniRule"/>
</dbReference>
<dbReference type="GO" id="GO:0046872">
    <property type="term" value="F:metal ion binding"/>
    <property type="evidence" value="ECO:0007669"/>
    <property type="project" value="UniProtKB-KW"/>
</dbReference>
<dbReference type="GO" id="GO:0003676">
    <property type="term" value="F:nucleic acid binding"/>
    <property type="evidence" value="ECO:0007669"/>
    <property type="project" value="InterPro"/>
</dbReference>
<dbReference type="GO" id="GO:0004535">
    <property type="term" value="F:poly(A)-specific ribonuclease activity"/>
    <property type="evidence" value="ECO:0007669"/>
    <property type="project" value="UniProtKB-UniRule"/>
</dbReference>
<dbReference type="GO" id="GO:0006397">
    <property type="term" value="P:mRNA processing"/>
    <property type="evidence" value="ECO:0007669"/>
    <property type="project" value="UniProtKB-KW"/>
</dbReference>
<dbReference type="GO" id="GO:0000289">
    <property type="term" value="P:nuclear-transcribed mRNA poly(A) tail shortening"/>
    <property type="evidence" value="ECO:0007669"/>
    <property type="project" value="UniProtKB-UniRule"/>
</dbReference>
<dbReference type="CDD" id="cd06143">
    <property type="entry name" value="PAN2_exo"/>
    <property type="match status" value="1"/>
</dbReference>
<dbReference type="FunFam" id="2.130.10.10:FF:000459">
    <property type="entry name" value="PAN2-PAN3 deadenylation complex catalytic subunit PAN2"/>
    <property type="match status" value="1"/>
</dbReference>
<dbReference type="Gene3D" id="3.90.70.10">
    <property type="entry name" value="Cysteine proteinases"/>
    <property type="match status" value="1"/>
</dbReference>
<dbReference type="Gene3D" id="3.30.420.10">
    <property type="entry name" value="Ribonuclease H-like superfamily/Ribonuclease H"/>
    <property type="match status" value="1"/>
</dbReference>
<dbReference type="Gene3D" id="2.130.10.10">
    <property type="entry name" value="YVTN repeat-like/Quinoprotein amine dehydrogenase"/>
    <property type="match status" value="1"/>
</dbReference>
<dbReference type="HAMAP" id="MF_03182">
    <property type="entry name" value="PAN2"/>
    <property type="match status" value="1"/>
</dbReference>
<dbReference type="InterPro" id="IPR013520">
    <property type="entry name" value="Exonuclease_RNaseT/DNA_pol3"/>
</dbReference>
<dbReference type="InterPro" id="IPR030843">
    <property type="entry name" value="PAN2"/>
</dbReference>
<dbReference type="InterPro" id="IPR050785">
    <property type="entry name" value="PAN2-PAN3_catalytic_subunit"/>
</dbReference>
<dbReference type="InterPro" id="IPR048841">
    <property type="entry name" value="PAN2_N"/>
</dbReference>
<dbReference type="InterPro" id="IPR028881">
    <property type="entry name" value="PAN2_UCH_dom"/>
</dbReference>
<dbReference type="InterPro" id="IPR038765">
    <property type="entry name" value="Papain-like_cys_pep_sf"/>
</dbReference>
<dbReference type="InterPro" id="IPR012337">
    <property type="entry name" value="RNaseH-like_sf"/>
</dbReference>
<dbReference type="InterPro" id="IPR036397">
    <property type="entry name" value="RNaseH_sf"/>
</dbReference>
<dbReference type="InterPro" id="IPR028889">
    <property type="entry name" value="USP_dom"/>
</dbReference>
<dbReference type="InterPro" id="IPR015943">
    <property type="entry name" value="WD40/YVTN_repeat-like_dom_sf"/>
</dbReference>
<dbReference type="InterPro" id="IPR036322">
    <property type="entry name" value="WD40_repeat_dom_sf"/>
</dbReference>
<dbReference type="PANTHER" id="PTHR15728">
    <property type="entry name" value="DEADENYLATION COMPLEX CATALYTIC SUBUNIT PAN2"/>
    <property type="match status" value="1"/>
</dbReference>
<dbReference type="PANTHER" id="PTHR15728:SF0">
    <property type="entry name" value="PAN2-PAN3 DEADENYLATION COMPLEX CATALYTIC SUBUNIT PAN2"/>
    <property type="match status" value="1"/>
</dbReference>
<dbReference type="Pfam" id="PF20770">
    <property type="entry name" value="PAN2_N"/>
    <property type="match status" value="1"/>
</dbReference>
<dbReference type="Pfam" id="PF00929">
    <property type="entry name" value="RNase_T"/>
    <property type="match status" value="1"/>
</dbReference>
<dbReference type="Pfam" id="PF13423">
    <property type="entry name" value="UCH_1"/>
    <property type="match status" value="1"/>
</dbReference>
<dbReference type="SMART" id="SM00479">
    <property type="entry name" value="EXOIII"/>
    <property type="match status" value="1"/>
</dbReference>
<dbReference type="SUPFAM" id="SSF54001">
    <property type="entry name" value="Cysteine proteinases"/>
    <property type="match status" value="1"/>
</dbReference>
<dbReference type="SUPFAM" id="SSF53098">
    <property type="entry name" value="Ribonuclease H-like"/>
    <property type="match status" value="1"/>
</dbReference>
<dbReference type="SUPFAM" id="SSF50978">
    <property type="entry name" value="WD40 repeat-like"/>
    <property type="match status" value="1"/>
</dbReference>
<dbReference type="PROSITE" id="PS50235">
    <property type="entry name" value="USP_3"/>
    <property type="match status" value="1"/>
</dbReference>
<reference key="1">
    <citation type="journal article" date="2009" name="Genome Res.">
        <title>Comparative genomic analyses of the human fungal pathogens Coccidioides and their relatives.</title>
        <authorList>
            <person name="Sharpton T.J."/>
            <person name="Stajich J.E."/>
            <person name="Rounsley S.D."/>
            <person name="Gardner M.J."/>
            <person name="Wortman J.R."/>
            <person name="Jordar V.S."/>
            <person name="Maiti R."/>
            <person name="Kodira C.D."/>
            <person name="Neafsey D.E."/>
            <person name="Zeng Q."/>
            <person name="Hung C.-Y."/>
            <person name="McMahan C."/>
            <person name="Muszewska A."/>
            <person name="Grynberg M."/>
            <person name="Mandel M.A."/>
            <person name="Kellner E.M."/>
            <person name="Barker B.M."/>
            <person name="Galgiani J.N."/>
            <person name="Orbach M.J."/>
            <person name="Kirkland T.N."/>
            <person name="Cole G.T."/>
            <person name="Henn M.R."/>
            <person name="Birren B.W."/>
            <person name="Taylor J.W."/>
        </authorList>
    </citation>
    <scope>NUCLEOTIDE SEQUENCE [LARGE SCALE GENOMIC DNA]</scope>
    <source>
        <strain>RS</strain>
    </source>
</reference>
<reference key="2">
    <citation type="journal article" date="2010" name="Genome Res.">
        <title>Population genomic sequencing of Coccidioides fungi reveals recent hybridization and transposon control.</title>
        <authorList>
            <person name="Neafsey D.E."/>
            <person name="Barker B.M."/>
            <person name="Sharpton T.J."/>
            <person name="Stajich J.E."/>
            <person name="Park D.J."/>
            <person name="Whiston E."/>
            <person name="Hung C.-Y."/>
            <person name="McMahan C."/>
            <person name="White J."/>
            <person name="Sykes S."/>
            <person name="Heiman D."/>
            <person name="Young S."/>
            <person name="Zeng Q."/>
            <person name="Abouelleil A."/>
            <person name="Aftuck L."/>
            <person name="Bessette D."/>
            <person name="Brown A."/>
            <person name="FitzGerald M."/>
            <person name="Lui A."/>
            <person name="Macdonald J.P."/>
            <person name="Priest M."/>
            <person name="Orbach M.J."/>
            <person name="Galgiani J.N."/>
            <person name="Kirkland T.N."/>
            <person name="Cole G.T."/>
            <person name="Birren B.W."/>
            <person name="Henn M.R."/>
            <person name="Taylor J.W."/>
            <person name="Rounsley S.D."/>
        </authorList>
    </citation>
    <scope>GENOME REANNOTATION</scope>
    <source>
        <strain>RS</strain>
    </source>
</reference>
<sequence length="1222" mass="135668">MEADWDEVSQVAVPPPGPHLLPTVASTVAFDDSQELLWVGNEFGRVSSFYGPELQRYTSVKAHASSEGQVRQFLFHDKGVISLSANSVHLASRCGLTQWHISHPEMTELRCMSFTAQPHKIIVAGLQSAMFIIDVEKGAIVDQLSTEYRYTIMKRSRYLCAATDTGSVNVLSLTDFSVVKSWKAHGAVINDMDARNDFLVTCGFSVRHAGSPIVDPLANVYDLKSLIPLPPIPFHAGAAFVRMHPRLQTTSFIASQTGQLQVVDLMNPNTINLRQANVAFMLGLEVSPSGEALAINDAECSIHLWGSPSKIHFNEIGKETEFSDIPTRPSMLDWSNDTPLNVIGMPYYHERLLSAWPSHLIFEIGNAPVPMDPAILPYLRPSEIGQYAQNPRKKRRYQVENTRLQSSTEVALAAPKFLSEKARELPNSKPEGAQEAVGALQGLKINGETKEDPLLKYSNVEIKYSKFGVDDFDFRYYNKTEFSGLETHIANSFTNSLLQLLKFIPLVRNLALHHVSTNCLCESCLLCEMGFLFDMLDKANGQNCQATNLLKTFSGFREAANLGLLEESLSNKSLSSAIQSVHRFFLNQIAHDYRTVYPNSDSLDNTLSTAAVESICCMFCRNEIVRPGNAFVTELIYPAADPKQAHRNQACRFSNILRSSIERETQNRGWCSTCRRYQQVSIRKTVQRMPLVLMLNAAINNSAHRRFWSIPGWLPEKIGVMIEDNQIQCYEGEQLRIRQQNNFEGLVVYELVGIVAEIDIVEQKKPHLVSFVDVSISAREPTKKSNWHLFNDFLVTGVSKEEVFSFNQGWKSPCTLAYQISTGRHGLDDSWKNELDTTLLFYEWSMNNRPPTDKCHILKSEEKPIAGTPIALDTEFVDLEKAEIEVKADGTQEMIRPSKSGLARVSVIRGSGNDEGVPFIDDYITIKDPIVDYVTQYSGIKPGDLDPRTSRHNLVALKVAYKKLWLLLNLGCVFVGHGLASDFRKINIQVPKAQTIDTQYLFFHPGKNRRLSLRYLAWAVFKEYIQEETTTTTSTSITTTTNPNIHDANTSTTTTTAITTTPPEGHDSIEDARMALRLWKKFKEYEDAGIVNQILEEIFREGVKVGFRPPARYPSQATPNPNNNNINNGVNPNGLSTPGSTNPISRLPLSGRNTPDFILPASASAAASVTGGPAGGGSSNGSMSGSTPSTPRQAFRRSTALTPSNGSFGGAKGLTFGGSPMR</sequence>
<feature type="chain" id="PRO_0000295343" description="PAN2-PAN3 deadenylation complex catalytic subunit PAN2">
    <location>
        <begin position="1"/>
        <end position="1222"/>
    </location>
</feature>
<feature type="repeat" description="WD 1" evidence="1">
    <location>
        <begin position="104"/>
        <end position="143"/>
    </location>
</feature>
<feature type="repeat" description="WD 2" evidence="1">
    <location>
        <begin position="276"/>
        <end position="315"/>
    </location>
</feature>
<feature type="domain" description="USP" evidence="1">
    <location>
        <begin position="452"/>
        <end position="821"/>
    </location>
</feature>
<feature type="domain" description="Exonuclease" evidence="1">
    <location>
        <begin position="871"/>
        <end position="1027"/>
    </location>
</feature>
<feature type="region of interest" description="Linker" evidence="1">
    <location>
        <begin position="316"/>
        <end position="451"/>
    </location>
</feature>
<feature type="region of interest" description="Disordered" evidence="2">
    <location>
        <begin position="1035"/>
        <end position="1067"/>
    </location>
</feature>
<feature type="region of interest" description="Disordered" evidence="2">
    <location>
        <begin position="1110"/>
        <end position="1152"/>
    </location>
</feature>
<feature type="region of interest" description="Disordered" evidence="2">
    <location>
        <begin position="1167"/>
        <end position="1222"/>
    </location>
</feature>
<feature type="compositionally biased region" description="Low complexity" evidence="2">
    <location>
        <begin position="1050"/>
        <end position="1061"/>
    </location>
</feature>
<feature type="compositionally biased region" description="Low complexity" evidence="2">
    <location>
        <begin position="1119"/>
        <end position="1133"/>
    </location>
</feature>
<feature type="compositionally biased region" description="Polar residues" evidence="2">
    <location>
        <begin position="1134"/>
        <end position="1144"/>
    </location>
</feature>
<feature type="compositionally biased region" description="Low complexity" evidence="2">
    <location>
        <begin position="1180"/>
        <end position="1191"/>
    </location>
</feature>
<feature type="compositionally biased region" description="Gly residues" evidence="2">
    <location>
        <begin position="1207"/>
        <end position="1216"/>
    </location>
</feature>
<feature type="binding site" evidence="1">
    <location>
        <position position="873"/>
    </location>
    <ligand>
        <name>a divalent metal cation</name>
        <dbReference type="ChEBI" id="CHEBI:60240"/>
        <note>catalytic</note>
    </ligand>
</feature>
<feature type="binding site" evidence="1">
    <location>
        <position position="875"/>
    </location>
    <ligand>
        <name>a divalent metal cation</name>
        <dbReference type="ChEBI" id="CHEBI:60240"/>
        <note>catalytic</note>
    </ligand>
</feature>
<feature type="binding site" evidence="1">
    <location>
        <position position="982"/>
    </location>
    <ligand>
        <name>a divalent metal cation</name>
        <dbReference type="ChEBI" id="CHEBI:60240"/>
        <note>catalytic</note>
    </ligand>
</feature>
<feature type="binding site" evidence="1">
    <location>
        <position position="1071"/>
    </location>
    <ligand>
        <name>a divalent metal cation</name>
        <dbReference type="ChEBI" id="CHEBI:60240"/>
        <note>catalytic</note>
    </ligand>
</feature>